<reference key="1">
    <citation type="journal article" date="2009" name="PLoS Genet.">
        <title>Organised genome dynamics in the Escherichia coli species results in highly diverse adaptive paths.</title>
        <authorList>
            <person name="Touchon M."/>
            <person name="Hoede C."/>
            <person name="Tenaillon O."/>
            <person name="Barbe V."/>
            <person name="Baeriswyl S."/>
            <person name="Bidet P."/>
            <person name="Bingen E."/>
            <person name="Bonacorsi S."/>
            <person name="Bouchier C."/>
            <person name="Bouvet O."/>
            <person name="Calteau A."/>
            <person name="Chiapello H."/>
            <person name="Clermont O."/>
            <person name="Cruveiller S."/>
            <person name="Danchin A."/>
            <person name="Diard M."/>
            <person name="Dossat C."/>
            <person name="Karoui M.E."/>
            <person name="Frapy E."/>
            <person name="Garry L."/>
            <person name="Ghigo J.M."/>
            <person name="Gilles A.M."/>
            <person name="Johnson J."/>
            <person name="Le Bouguenec C."/>
            <person name="Lescat M."/>
            <person name="Mangenot S."/>
            <person name="Martinez-Jehanne V."/>
            <person name="Matic I."/>
            <person name="Nassif X."/>
            <person name="Oztas S."/>
            <person name="Petit M.A."/>
            <person name="Pichon C."/>
            <person name="Rouy Z."/>
            <person name="Ruf C.S."/>
            <person name="Schneider D."/>
            <person name="Tourret J."/>
            <person name="Vacherie B."/>
            <person name="Vallenet D."/>
            <person name="Medigue C."/>
            <person name="Rocha E.P.C."/>
            <person name="Denamur E."/>
        </authorList>
    </citation>
    <scope>NUCLEOTIDE SEQUENCE [LARGE SCALE GENOMIC DNA]</scope>
    <source>
        <strain>ATCC 35469 / DSM 13698 / BCRC 15582 / CCUG 18766 / IAM 14443 / JCM 21226 / LMG 7866 / NBRC 102419 / NCTC 12128 / CDC 0568-73</strain>
    </source>
</reference>
<evidence type="ECO:0000255" key="1">
    <source>
        <dbReference type="HAMAP-Rule" id="MF_01279"/>
    </source>
</evidence>
<gene>
    <name evidence="1" type="primary">pepQ</name>
    <name type="ordered locus">EFER_3634</name>
</gene>
<dbReference type="EC" id="3.4.13.9" evidence="1"/>
<dbReference type="EMBL" id="CU928158">
    <property type="protein sequence ID" value="CAQ91096.1"/>
    <property type="molecule type" value="Genomic_DNA"/>
</dbReference>
<dbReference type="RefSeq" id="WP_000444587.1">
    <property type="nucleotide sequence ID" value="NC_011740.1"/>
</dbReference>
<dbReference type="SMR" id="B7LTY8"/>
<dbReference type="MEROPS" id="M24.003"/>
<dbReference type="GeneID" id="75059765"/>
<dbReference type="KEGG" id="efe:EFER_3634"/>
<dbReference type="HOGENOM" id="CLU_050675_0_0_6"/>
<dbReference type="OrthoDB" id="9806388at2"/>
<dbReference type="Proteomes" id="UP000000745">
    <property type="component" value="Chromosome"/>
</dbReference>
<dbReference type="GO" id="GO:0005829">
    <property type="term" value="C:cytosol"/>
    <property type="evidence" value="ECO:0007669"/>
    <property type="project" value="TreeGrafter"/>
</dbReference>
<dbReference type="GO" id="GO:0004177">
    <property type="term" value="F:aminopeptidase activity"/>
    <property type="evidence" value="ECO:0007669"/>
    <property type="project" value="TreeGrafter"/>
</dbReference>
<dbReference type="GO" id="GO:0046872">
    <property type="term" value="F:metal ion binding"/>
    <property type="evidence" value="ECO:0007669"/>
    <property type="project" value="UniProtKB-KW"/>
</dbReference>
<dbReference type="GO" id="GO:0008235">
    <property type="term" value="F:metalloexopeptidase activity"/>
    <property type="evidence" value="ECO:0007669"/>
    <property type="project" value="UniProtKB-UniRule"/>
</dbReference>
<dbReference type="GO" id="GO:0016795">
    <property type="term" value="F:phosphoric triester hydrolase activity"/>
    <property type="evidence" value="ECO:0007669"/>
    <property type="project" value="InterPro"/>
</dbReference>
<dbReference type="GO" id="GO:0102009">
    <property type="term" value="F:proline dipeptidase activity"/>
    <property type="evidence" value="ECO:0007669"/>
    <property type="project" value="UniProtKB-EC"/>
</dbReference>
<dbReference type="GO" id="GO:0006508">
    <property type="term" value="P:proteolysis"/>
    <property type="evidence" value="ECO:0007669"/>
    <property type="project" value="UniProtKB-KW"/>
</dbReference>
<dbReference type="CDD" id="cd01087">
    <property type="entry name" value="Prolidase"/>
    <property type="match status" value="1"/>
</dbReference>
<dbReference type="FunFam" id="3.40.350.10:FF:000002">
    <property type="entry name" value="Xaa-Pro dipeptidase"/>
    <property type="match status" value="1"/>
</dbReference>
<dbReference type="FunFam" id="3.90.230.10:FF:000006">
    <property type="entry name" value="Xaa-Pro dipeptidase"/>
    <property type="match status" value="1"/>
</dbReference>
<dbReference type="Gene3D" id="3.90.230.10">
    <property type="entry name" value="Creatinase/methionine aminopeptidase superfamily"/>
    <property type="match status" value="1"/>
</dbReference>
<dbReference type="Gene3D" id="3.40.350.10">
    <property type="entry name" value="Creatinase/prolidase N-terminal domain"/>
    <property type="match status" value="1"/>
</dbReference>
<dbReference type="HAMAP" id="MF_01279">
    <property type="entry name" value="X_Pro_dipeptid"/>
    <property type="match status" value="1"/>
</dbReference>
<dbReference type="InterPro" id="IPR029149">
    <property type="entry name" value="Creatin/AminoP/Spt16_N"/>
</dbReference>
<dbReference type="InterPro" id="IPR036005">
    <property type="entry name" value="Creatinase/aminopeptidase-like"/>
</dbReference>
<dbReference type="InterPro" id="IPR048819">
    <property type="entry name" value="PepQ_N"/>
</dbReference>
<dbReference type="InterPro" id="IPR000994">
    <property type="entry name" value="Pept_M24"/>
</dbReference>
<dbReference type="InterPro" id="IPR001131">
    <property type="entry name" value="Peptidase_M24B_aminopep-P_CS"/>
</dbReference>
<dbReference type="InterPro" id="IPR052433">
    <property type="entry name" value="X-Pro_dipept-like"/>
</dbReference>
<dbReference type="InterPro" id="IPR022846">
    <property type="entry name" value="X_Pro_dipept"/>
</dbReference>
<dbReference type="NCBIfam" id="NF010133">
    <property type="entry name" value="PRK13607.1"/>
    <property type="match status" value="1"/>
</dbReference>
<dbReference type="PANTHER" id="PTHR43226">
    <property type="entry name" value="XAA-PRO AMINOPEPTIDASE 3"/>
    <property type="match status" value="1"/>
</dbReference>
<dbReference type="PANTHER" id="PTHR43226:SF8">
    <property type="entry name" value="XAA-PRO DIPEPTIDASE"/>
    <property type="match status" value="1"/>
</dbReference>
<dbReference type="Pfam" id="PF21216">
    <property type="entry name" value="PepQ_N"/>
    <property type="match status" value="1"/>
</dbReference>
<dbReference type="Pfam" id="PF00557">
    <property type="entry name" value="Peptidase_M24"/>
    <property type="match status" value="1"/>
</dbReference>
<dbReference type="SUPFAM" id="SSF55920">
    <property type="entry name" value="Creatinase/aminopeptidase"/>
    <property type="match status" value="1"/>
</dbReference>
<dbReference type="PROSITE" id="PS00491">
    <property type="entry name" value="PROLINE_PEPTIDASE"/>
    <property type="match status" value="1"/>
</dbReference>
<accession>B7LTY8</accession>
<proteinExistence type="inferred from homology"/>
<feature type="chain" id="PRO_1000140320" description="Xaa-Pro dipeptidase">
    <location>
        <begin position="1"/>
        <end position="443"/>
    </location>
</feature>
<feature type="binding site" evidence="1">
    <location>
        <position position="246"/>
    </location>
    <ligand>
        <name>Mn(2+)</name>
        <dbReference type="ChEBI" id="CHEBI:29035"/>
        <label>2</label>
    </ligand>
</feature>
<feature type="binding site" evidence="1">
    <location>
        <position position="257"/>
    </location>
    <ligand>
        <name>Mn(2+)</name>
        <dbReference type="ChEBI" id="CHEBI:29035"/>
        <label>1</label>
    </ligand>
</feature>
<feature type="binding site" evidence="1">
    <location>
        <position position="257"/>
    </location>
    <ligand>
        <name>Mn(2+)</name>
        <dbReference type="ChEBI" id="CHEBI:29035"/>
        <label>2</label>
    </ligand>
</feature>
<feature type="binding site" evidence="1">
    <location>
        <position position="339"/>
    </location>
    <ligand>
        <name>Mn(2+)</name>
        <dbReference type="ChEBI" id="CHEBI:29035"/>
        <label>1</label>
    </ligand>
</feature>
<feature type="binding site" evidence="1">
    <location>
        <position position="384"/>
    </location>
    <ligand>
        <name>Mn(2+)</name>
        <dbReference type="ChEBI" id="CHEBI:29035"/>
        <label>1</label>
    </ligand>
</feature>
<feature type="binding site" evidence="1">
    <location>
        <position position="423"/>
    </location>
    <ligand>
        <name>Mn(2+)</name>
        <dbReference type="ChEBI" id="CHEBI:29035"/>
        <label>1</label>
    </ligand>
</feature>
<feature type="binding site" evidence="1">
    <location>
        <position position="423"/>
    </location>
    <ligand>
        <name>Mn(2+)</name>
        <dbReference type="ChEBI" id="CHEBI:29035"/>
        <label>2</label>
    </ligand>
</feature>
<comment type="function">
    <text evidence="1">Splits dipeptides with a prolyl residue in the C-terminal position.</text>
</comment>
<comment type="catalytic activity">
    <reaction evidence="1">
        <text>Xaa-L-Pro dipeptide + H2O = an L-alpha-amino acid + L-proline</text>
        <dbReference type="Rhea" id="RHEA:76407"/>
        <dbReference type="ChEBI" id="CHEBI:15377"/>
        <dbReference type="ChEBI" id="CHEBI:59869"/>
        <dbReference type="ChEBI" id="CHEBI:60039"/>
        <dbReference type="ChEBI" id="CHEBI:195196"/>
        <dbReference type="EC" id="3.4.13.9"/>
    </reaction>
</comment>
<comment type="cofactor">
    <cofactor evidence="1">
        <name>Mn(2+)</name>
        <dbReference type="ChEBI" id="CHEBI:29035"/>
    </cofactor>
    <text evidence="1">Binds 2 manganese ions per subunit.</text>
</comment>
<comment type="similarity">
    <text evidence="1">Belongs to the peptidase M24B family. Bacterial-type prolidase subfamily.</text>
</comment>
<organism>
    <name type="scientific">Escherichia fergusonii (strain ATCC 35469 / DSM 13698 / CCUG 18766 / IAM 14443 / JCM 21226 / LMG 7866 / NBRC 102419 / NCTC 12128 / CDC 0568-73)</name>
    <dbReference type="NCBI Taxonomy" id="585054"/>
    <lineage>
        <taxon>Bacteria</taxon>
        <taxon>Pseudomonadati</taxon>
        <taxon>Pseudomonadota</taxon>
        <taxon>Gammaproteobacteria</taxon>
        <taxon>Enterobacterales</taxon>
        <taxon>Enterobacteriaceae</taxon>
        <taxon>Escherichia</taxon>
    </lineage>
</organism>
<name>PEPQ_ESCF3</name>
<protein>
    <recommendedName>
        <fullName evidence="1">Xaa-Pro dipeptidase</fullName>
        <shortName evidence="1">X-Pro dipeptidase</shortName>
        <ecNumber evidence="1">3.4.13.9</ecNumber>
    </recommendedName>
    <alternativeName>
        <fullName evidence="1">Imidodipeptidase</fullName>
    </alternativeName>
    <alternativeName>
        <fullName evidence="1">Proline dipeptidase</fullName>
        <shortName evidence="1">Prolidase</shortName>
    </alternativeName>
</protein>
<sequence>MESLASLYKNHIATLQKRARDALARFKLDALLIHSGELFNVFLDDHPYPFKVNPQFKAWVPVTQVPNCWLLVDGVNKPKLWFYLPVDYWHNVEPLPTSFWTEDVEVIALPKADGIGSLLPAARGNIGYIGPVPERALQLGIEASNINPKGVIDYLHYYRSFKTEYELACMREAQKMAVNGHRAAEEAFRSGMSEFDINIAYLTATGHRDTDVPYSNIVALNEHAAVLHYTKLDHQAPEEMRSFLLDAGAEYNGYAADLTRTWSAKSDNDYAQLVKDVNDEQLALIATMKAGVSYVDYHIQFHQRIAKLLRKHQIITDMSEEAMVENDLTGPFMPHGIGHPLGLQVHDVAGFMQDDSGTHLAAPAKYPYLRCTRILQPGMVLTIEPGIYFIESLLAPWREGQFSKHFNWQKIEALKPFGGIRIEDNVVIHENNVENMTRDLKLA</sequence>
<keyword id="KW-0224">Dipeptidase</keyword>
<keyword id="KW-0378">Hydrolase</keyword>
<keyword id="KW-0464">Manganese</keyword>
<keyword id="KW-0479">Metal-binding</keyword>
<keyword id="KW-0482">Metalloprotease</keyword>
<keyword id="KW-0645">Protease</keyword>